<evidence type="ECO:0000255" key="1">
    <source>
        <dbReference type="HAMAP-Rule" id="MF_01149"/>
    </source>
</evidence>
<dbReference type="EMBL" id="AM286415">
    <property type="protein sequence ID" value="CAL11609.1"/>
    <property type="molecule type" value="Genomic_DNA"/>
</dbReference>
<dbReference type="RefSeq" id="WP_005171044.1">
    <property type="nucleotide sequence ID" value="NC_008800.1"/>
</dbReference>
<dbReference type="RefSeq" id="YP_001005825.1">
    <property type="nucleotide sequence ID" value="NC_008800.1"/>
</dbReference>
<dbReference type="SMR" id="A1JMG4"/>
<dbReference type="KEGG" id="yen:YE1530"/>
<dbReference type="PATRIC" id="fig|393305.7.peg.1657"/>
<dbReference type="eggNOG" id="COG2814">
    <property type="taxonomic scope" value="Bacteria"/>
</dbReference>
<dbReference type="HOGENOM" id="CLU_035018_1_2_6"/>
<dbReference type="OrthoDB" id="9810614at2"/>
<dbReference type="Proteomes" id="UP000000642">
    <property type="component" value="Chromosome"/>
</dbReference>
<dbReference type="GO" id="GO:0005886">
    <property type="term" value="C:plasma membrane"/>
    <property type="evidence" value="ECO:0007669"/>
    <property type="project" value="UniProtKB-SubCell"/>
</dbReference>
<dbReference type="GO" id="GO:0022857">
    <property type="term" value="F:transmembrane transporter activity"/>
    <property type="evidence" value="ECO:0007669"/>
    <property type="project" value="UniProtKB-UniRule"/>
</dbReference>
<dbReference type="CDD" id="cd17477">
    <property type="entry name" value="MFS_YcaD_like"/>
    <property type="match status" value="1"/>
</dbReference>
<dbReference type="FunFam" id="1.20.1250.20:FF:000041">
    <property type="entry name" value="Uncharacterized MFS-type transporter YcaD"/>
    <property type="match status" value="1"/>
</dbReference>
<dbReference type="Gene3D" id="1.20.1250.20">
    <property type="entry name" value="MFS general substrate transporter like domains"/>
    <property type="match status" value="2"/>
</dbReference>
<dbReference type="HAMAP" id="MF_01149">
    <property type="entry name" value="MFS_YcaD"/>
    <property type="match status" value="1"/>
</dbReference>
<dbReference type="InterPro" id="IPR011701">
    <property type="entry name" value="MFS"/>
</dbReference>
<dbReference type="InterPro" id="IPR020846">
    <property type="entry name" value="MFS_dom"/>
</dbReference>
<dbReference type="InterPro" id="IPR036259">
    <property type="entry name" value="MFS_trans_sf"/>
</dbReference>
<dbReference type="InterPro" id="IPR023745">
    <property type="entry name" value="MFS_YcaD"/>
</dbReference>
<dbReference type="InterPro" id="IPR047200">
    <property type="entry name" value="MFS_YcaD-like"/>
</dbReference>
<dbReference type="NCBIfam" id="NF002962">
    <property type="entry name" value="PRK03633.1"/>
    <property type="match status" value="1"/>
</dbReference>
<dbReference type="PANTHER" id="PTHR23521">
    <property type="entry name" value="TRANSPORTER MFS SUPERFAMILY"/>
    <property type="match status" value="1"/>
</dbReference>
<dbReference type="PANTHER" id="PTHR23521:SF2">
    <property type="entry name" value="TRANSPORTER MFS SUPERFAMILY"/>
    <property type="match status" value="1"/>
</dbReference>
<dbReference type="Pfam" id="PF07690">
    <property type="entry name" value="MFS_1"/>
    <property type="match status" value="1"/>
</dbReference>
<dbReference type="SUPFAM" id="SSF103473">
    <property type="entry name" value="MFS general substrate transporter"/>
    <property type="match status" value="1"/>
</dbReference>
<dbReference type="PROSITE" id="PS50850">
    <property type="entry name" value="MFS"/>
    <property type="match status" value="1"/>
</dbReference>
<comment type="subcellular location">
    <subcellularLocation>
        <location evidence="1">Cell inner membrane</location>
        <topology evidence="1">Multi-pass membrane protein</topology>
    </subcellularLocation>
</comment>
<comment type="similarity">
    <text evidence="1">Belongs to the major facilitator superfamily. YcaD (TC 2.A.1.26) family.</text>
</comment>
<organism>
    <name type="scientific">Yersinia enterocolitica serotype O:8 / biotype 1B (strain NCTC 13174 / 8081)</name>
    <dbReference type="NCBI Taxonomy" id="393305"/>
    <lineage>
        <taxon>Bacteria</taxon>
        <taxon>Pseudomonadati</taxon>
        <taxon>Pseudomonadota</taxon>
        <taxon>Gammaproteobacteria</taxon>
        <taxon>Enterobacterales</taxon>
        <taxon>Yersiniaceae</taxon>
        <taxon>Yersinia</taxon>
    </lineage>
</organism>
<protein>
    <recommendedName>
        <fullName evidence="1">Uncharacterized MFS-type transporter YE1530</fullName>
    </recommendedName>
</protein>
<sequence length="382" mass="41698">MSAYSRPVLLLLCGLLLFTISIAVLNTLVPLWLSHQQLPTWQVGMVSSSYFSGNLVGTLIAGRIIQQLGFNRSYHYSCILFALATCGLMLSVDFWSWLGWRFFAGVACALIWVIVESALLRSGTVTNRGQLLAAYMMVYYLGTVTGQLLLGVVSTQLLSVIPWVSALVITAMLPLLFAHFSHQDSGDVPHIAVWPMLKRRSARLGINGCIISGVLLGSLYGLLPLYLSHQGMSDASVGWWMALLVSSGIIGQWPIGKMADRYGRLLVLRIQVFVVILGSIAILGNYALAPALFILGCAGFTLYPVAMAWACEKVSADKLVAMNQALLMSYTIGSLTGPTMTSLLMQRYSDNLLFIMIAGVALVYLMMLLRKPDQQKTPFAAV</sequence>
<name>Y1530_YERE8</name>
<gene>
    <name type="ordered locus">YE1530</name>
</gene>
<proteinExistence type="inferred from homology"/>
<accession>A1JMG4</accession>
<feature type="chain" id="PRO_1000065499" description="Uncharacterized MFS-type transporter YE1530">
    <location>
        <begin position="1"/>
        <end position="382"/>
    </location>
</feature>
<feature type="transmembrane region" description="Helical" evidence="1">
    <location>
        <begin position="8"/>
        <end position="28"/>
    </location>
</feature>
<feature type="transmembrane region" description="Helical" evidence="1">
    <location>
        <begin position="41"/>
        <end position="61"/>
    </location>
</feature>
<feature type="transmembrane region" description="Helical" evidence="1">
    <location>
        <begin position="73"/>
        <end position="93"/>
    </location>
</feature>
<feature type="transmembrane region" description="Helical" evidence="1">
    <location>
        <begin position="94"/>
        <end position="114"/>
    </location>
</feature>
<feature type="transmembrane region" description="Helical" evidence="1">
    <location>
        <begin position="133"/>
        <end position="153"/>
    </location>
</feature>
<feature type="transmembrane region" description="Helical" evidence="1">
    <location>
        <begin position="157"/>
        <end position="177"/>
    </location>
</feature>
<feature type="transmembrane region" description="Helical" evidence="1">
    <location>
        <begin position="208"/>
        <end position="228"/>
    </location>
</feature>
<feature type="transmembrane region" description="Helical" evidence="1">
    <location>
        <begin position="235"/>
        <end position="255"/>
    </location>
</feature>
<feature type="transmembrane region" description="Helical" evidence="1">
    <location>
        <begin position="274"/>
        <end position="294"/>
    </location>
</feature>
<feature type="transmembrane region" description="Helical" evidence="1">
    <location>
        <begin position="295"/>
        <end position="315"/>
    </location>
</feature>
<feature type="transmembrane region" description="Helical" evidence="1">
    <location>
        <begin position="325"/>
        <end position="345"/>
    </location>
</feature>
<feature type="transmembrane region" description="Helical" evidence="1">
    <location>
        <begin position="349"/>
        <end position="369"/>
    </location>
</feature>
<keyword id="KW-0997">Cell inner membrane</keyword>
<keyword id="KW-1003">Cell membrane</keyword>
<keyword id="KW-0472">Membrane</keyword>
<keyword id="KW-0812">Transmembrane</keyword>
<keyword id="KW-1133">Transmembrane helix</keyword>
<keyword id="KW-0813">Transport</keyword>
<reference key="1">
    <citation type="journal article" date="2006" name="PLoS Genet.">
        <title>The complete genome sequence and comparative genome analysis of the high pathogenicity Yersinia enterocolitica strain 8081.</title>
        <authorList>
            <person name="Thomson N.R."/>
            <person name="Howard S."/>
            <person name="Wren B.W."/>
            <person name="Holden M.T.G."/>
            <person name="Crossman L."/>
            <person name="Challis G.L."/>
            <person name="Churcher C."/>
            <person name="Mungall K."/>
            <person name="Brooks K."/>
            <person name="Chillingworth T."/>
            <person name="Feltwell T."/>
            <person name="Abdellah Z."/>
            <person name="Hauser H."/>
            <person name="Jagels K."/>
            <person name="Maddison M."/>
            <person name="Moule S."/>
            <person name="Sanders M."/>
            <person name="Whitehead S."/>
            <person name="Quail M.A."/>
            <person name="Dougan G."/>
            <person name="Parkhill J."/>
            <person name="Prentice M.B."/>
        </authorList>
    </citation>
    <scope>NUCLEOTIDE SEQUENCE [LARGE SCALE GENOMIC DNA]</scope>
    <source>
        <strain>NCTC 13174 / 8081</strain>
    </source>
</reference>